<proteinExistence type="inferred from homology"/>
<reference key="1">
    <citation type="submission" date="2006-08" db="EMBL/GenBank/DDBJ databases">
        <title>Complete sequence of Shewanella sp. MR-4.</title>
        <authorList>
            <consortium name="US DOE Joint Genome Institute"/>
            <person name="Copeland A."/>
            <person name="Lucas S."/>
            <person name="Lapidus A."/>
            <person name="Barry K."/>
            <person name="Detter J.C."/>
            <person name="Glavina del Rio T."/>
            <person name="Hammon N."/>
            <person name="Israni S."/>
            <person name="Dalin E."/>
            <person name="Tice H."/>
            <person name="Pitluck S."/>
            <person name="Kiss H."/>
            <person name="Brettin T."/>
            <person name="Bruce D."/>
            <person name="Han C."/>
            <person name="Tapia R."/>
            <person name="Gilna P."/>
            <person name="Schmutz J."/>
            <person name="Larimer F."/>
            <person name="Land M."/>
            <person name="Hauser L."/>
            <person name="Kyrpides N."/>
            <person name="Mikhailova N."/>
            <person name="Nealson K."/>
            <person name="Konstantinidis K."/>
            <person name="Klappenbach J."/>
            <person name="Tiedje J."/>
            <person name="Richardson P."/>
        </authorList>
    </citation>
    <scope>NUCLEOTIDE SEQUENCE [LARGE SCALE GENOMIC DNA]</scope>
    <source>
        <strain>MR-4</strain>
    </source>
</reference>
<keyword id="KW-0067">ATP-binding</keyword>
<keyword id="KW-0963">Cytoplasm</keyword>
<keyword id="KW-0418">Kinase</keyword>
<keyword id="KW-0547">Nucleotide-binding</keyword>
<keyword id="KW-0808">Transferase</keyword>
<organism>
    <name type="scientific">Shewanella sp. (strain MR-4)</name>
    <dbReference type="NCBI Taxonomy" id="60480"/>
    <lineage>
        <taxon>Bacteria</taxon>
        <taxon>Pseudomonadati</taxon>
        <taxon>Pseudomonadota</taxon>
        <taxon>Gammaproteobacteria</taxon>
        <taxon>Alteromonadales</taxon>
        <taxon>Shewanellaceae</taxon>
        <taxon>Shewanella</taxon>
    </lineage>
</organism>
<evidence type="ECO:0000255" key="1">
    <source>
        <dbReference type="HAMAP-Rule" id="MF_00238"/>
    </source>
</evidence>
<feature type="chain" id="PRO_1000048279" description="Cytidylate kinase">
    <location>
        <begin position="1"/>
        <end position="230"/>
    </location>
</feature>
<feature type="binding site" evidence="1">
    <location>
        <begin position="12"/>
        <end position="20"/>
    </location>
    <ligand>
        <name>ATP</name>
        <dbReference type="ChEBI" id="CHEBI:30616"/>
    </ligand>
</feature>
<sequence>MSERAPVVTIDGPSGAGKGTISQLLAKHLGWQLLDSGAIYRVLALAAIHHDVELENEESITLLAAHLDVKFLTGNEKDPVQVILEGEDVTTAIRTQECSNAASKVAAFPRVREALLRRQRAFRTAPGLIADGRDMGTVVFPTASAKLYLTASAEERAQRRYNQLQDKGFDVNIERLLAEIIERDDRDMNRPVAPLVPAEDALVIDTSDKGIDEVLELALNYINQKLSNTN</sequence>
<name>KCY_SHESM</name>
<protein>
    <recommendedName>
        <fullName evidence="1">Cytidylate kinase</fullName>
        <shortName evidence="1">CK</shortName>
        <ecNumber evidence="1">2.7.4.25</ecNumber>
    </recommendedName>
    <alternativeName>
        <fullName evidence="1">Cytidine monophosphate kinase</fullName>
        <shortName evidence="1">CMP kinase</shortName>
    </alternativeName>
</protein>
<dbReference type="EC" id="2.7.4.25" evidence="1"/>
<dbReference type="EMBL" id="CP000446">
    <property type="protein sequence ID" value="ABI38997.1"/>
    <property type="molecule type" value="Genomic_DNA"/>
</dbReference>
<dbReference type="RefSeq" id="WP_011622694.1">
    <property type="nucleotide sequence ID" value="NC_008321.1"/>
</dbReference>
<dbReference type="SMR" id="Q0HIX0"/>
<dbReference type="KEGG" id="she:Shewmr4_1923"/>
<dbReference type="HOGENOM" id="CLU_079959_2_0_6"/>
<dbReference type="GO" id="GO:0005829">
    <property type="term" value="C:cytosol"/>
    <property type="evidence" value="ECO:0007669"/>
    <property type="project" value="TreeGrafter"/>
</dbReference>
<dbReference type="GO" id="GO:0005524">
    <property type="term" value="F:ATP binding"/>
    <property type="evidence" value="ECO:0007669"/>
    <property type="project" value="UniProtKB-UniRule"/>
</dbReference>
<dbReference type="GO" id="GO:0036430">
    <property type="term" value="F:CMP kinase activity"/>
    <property type="evidence" value="ECO:0007669"/>
    <property type="project" value="RHEA"/>
</dbReference>
<dbReference type="GO" id="GO:0036431">
    <property type="term" value="F:dCMP kinase activity"/>
    <property type="evidence" value="ECO:0007669"/>
    <property type="project" value="RHEA"/>
</dbReference>
<dbReference type="GO" id="GO:0015949">
    <property type="term" value="P:nucleobase-containing small molecule interconversion"/>
    <property type="evidence" value="ECO:0007669"/>
    <property type="project" value="TreeGrafter"/>
</dbReference>
<dbReference type="GO" id="GO:0006220">
    <property type="term" value="P:pyrimidine nucleotide metabolic process"/>
    <property type="evidence" value="ECO:0007669"/>
    <property type="project" value="UniProtKB-UniRule"/>
</dbReference>
<dbReference type="CDD" id="cd02020">
    <property type="entry name" value="CMPK"/>
    <property type="match status" value="1"/>
</dbReference>
<dbReference type="FunFam" id="3.40.50.300:FF:000262">
    <property type="entry name" value="Cytidylate kinase"/>
    <property type="match status" value="1"/>
</dbReference>
<dbReference type="Gene3D" id="3.40.50.300">
    <property type="entry name" value="P-loop containing nucleotide triphosphate hydrolases"/>
    <property type="match status" value="1"/>
</dbReference>
<dbReference type="HAMAP" id="MF_00238">
    <property type="entry name" value="Cytidyl_kinase_type1"/>
    <property type="match status" value="1"/>
</dbReference>
<dbReference type="InterPro" id="IPR003136">
    <property type="entry name" value="Cytidylate_kin"/>
</dbReference>
<dbReference type="InterPro" id="IPR011994">
    <property type="entry name" value="Cytidylate_kinase_dom"/>
</dbReference>
<dbReference type="InterPro" id="IPR027417">
    <property type="entry name" value="P-loop_NTPase"/>
</dbReference>
<dbReference type="NCBIfam" id="TIGR00017">
    <property type="entry name" value="cmk"/>
    <property type="match status" value="1"/>
</dbReference>
<dbReference type="PANTHER" id="PTHR21299:SF2">
    <property type="entry name" value="CYTIDYLATE KINASE"/>
    <property type="match status" value="1"/>
</dbReference>
<dbReference type="PANTHER" id="PTHR21299">
    <property type="entry name" value="CYTIDYLATE KINASE/PANTOATE-BETA-ALANINE LIGASE"/>
    <property type="match status" value="1"/>
</dbReference>
<dbReference type="Pfam" id="PF02224">
    <property type="entry name" value="Cytidylate_kin"/>
    <property type="match status" value="1"/>
</dbReference>
<dbReference type="SUPFAM" id="SSF52540">
    <property type="entry name" value="P-loop containing nucleoside triphosphate hydrolases"/>
    <property type="match status" value="1"/>
</dbReference>
<comment type="catalytic activity">
    <reaction evidence="1">
        <text>CMP + ATP = CDP + ADP</text>
        <dbReference type="Rhea" id="RHEA:11600"/>
        <dbReference type="ChEBI" id="CHEBI:30616"/>
        <dbReference type="ChEBI" id="CHEBI:58069"/>
        <dbReference type="ChEBI" id="CHEBI:60377"/>
        <dbReference type="ChEBI" id="CHEBI:456216"/>
        <dbReference type="EC" id="2.7.4.25"/>
    </reaction>
</comment>
<comment type="catalytic activity">
    <reaction evidence="1">
        <text>dCMP + ATP = dCDP + ADP</text>
        <dbReference type="Rhea" id="RHEA:25094"/>
        <dbReference type="ChEBI" id="CHEBI:30616"/>
        <dbReference type="ChEBI" id="CHEBI:57566"/>
        <dbReference type="ChEBI" id="CHEBI:58593"/>
        <dbReference type="ChEBI" id="CHEBI:456216"/>
        <dbReference type="EC" id="2.7.4.25"/>
    </reaction>
</comment>
<comment type="subcellular location">
    <subcellularLocation>
        <location evidence="1">Cytoplasm</location>
    </subcellularLocation>
</comment>
<comment type="similarity">
    <text evidence="1">Belongs to the cytidylate kinase family. Type 1 subfamily.</text>
</comment>
<accession>Q0HIX0</accession>
<gene>
    <name evidence="1" type="primary">cmk</name>
    <name type="ordered locus">Shewmr4_1923</name>
</gene>